<reference key="1">
    <citation type="journal article" date="2002" name="Nucleic Acids Res.">
        <title>Genome sequence of Oceanobacillus iheyensis isolated from the Iheya Ridge and its unexpected adaptive capabilities to extreme environments.</title>
        <authorList>
            <person name="Takami H."/>
            <person name="Takaki Y."/>
            <person name="Uchiyama I."/>
        </authorList>
    </citation>
    <scope>NUCLEOTIDE SEQUENCE [LARGE SCALE GENOMIC DNA]</scope>
    <source>
        <strain>DSM 14371 / CIP 107618 / JCM 11309 / KCTC 3954 / HTE831</strain>
    </source>
</reference>
<comment type="function">
    <text evidence="1">Component of the acetyl coenzyme A carboxylase (ACC) complex. First, biotin carboxylase catalyzes the carboxylation of biotin on its carrier protein (BCCP) and then the CO(2) group is transferred by the carboxyltransferase to acetyl-CoA to form malonyl-CoA.</text>
</comment>
<comment type="catalytic activity">
    <reaction evidence="1">
        <text>N(6)-carboxybiotinyl-L-lysyl-[protein] + acetyl-CoA = N(6)-biotinyl-L-lysyl-[protein] + malonyl-CoA</text>
        <dbReference type="Rhea" id="RHEA:54728"/>
        <dbReference type="Rhea" id="RHEA-COMP:10505"/>
        <dbReference type="Rhea" id="RHEA-COMP:10506"/>
        <dbReference type="ChEBI" id="CHEBI:57288"/>
        <dbReference type="ChEBI" id="CHEBI:57384"/>
        <dbReference type="ChEBI" id="CHEBI:83144"/>
        <dbReference type="ChEBI" id="CHEBI:83145"/>
        <dbReference type="EC" id="2.1.3.15"/>
    </reaction>
</comment>
<comment type="pathway">
    <text evidence="1">Lipid metabolism; malonyl-CoA biosynthesis; malonyl-CoA from acetyl-CoA: step 1/1.</text>
</comment>
<comment type="subunit">
    <text evidence="1">Acetyl-CoA carboxylase is a heterohexamer composed of biotin carboxyl carrier protein (AccB), biotin carboxylase (AccC) and two subunits each of ACCase subunit alpha (AccA) and ACCase subunit beta (AccD).</text>
</comment>
<comment type="subcellular location">
    <subcellularLocation>
        <location evidence="1">Cytoplasm</location>
    </subcellularLocation>
</comment>
<comment type="similarity">
    <text evidence="1">Belongs to the AccA family.</text>
</comment>
<dbReference type="EC" id="2.1.3.15" evidence="1"/>
<dbReference type="EMBL" id="BA000028">
    <property type="protein sequence ID" value="BAC14129.1"/>
    <property type="molecule type" value="Genomic_DNA"/>
</dbReference>
<dbReference type="RefSeq" id="WP_011066567.1">
    <property type="nucleotide sequence ID" value="NC_004193.1"/>
</dbReference>
<dbReference type="SMR" id="Q8EPD5"/>
<dbReference type="STRING" id="221109.gene:10734421"/>
<dbReference type="KEGG" id="oih:OB2173"/>
<dbReference type="eggNOG" id="COG0825">
    <property type="taxonomic scope" value="Bacteria"/>
</dbReference>
<dbReference type="HOGENOM" id="CLU_015486_0_2_9"/>
<dbReference type="OrthoDB" id="9808023at2"/>
<dbReference type="PhylomeDB" id="Q8EPD5"/>
<dbReference type="UniPathway" id="UPA00655">
    <property type="reaction ID" value="UER00711"/>
</dbReference>
<dbReference type="Proteomes" id="UP000000822">
    <property type="component" value="Chromosome"/>
</dbReference>
<dbReference type="GO" id="GO:0009317">
    <property type="term" value="C:acetyl-CoA carboxylase complex"/>
    <property type="evidence" value="ECO:0007669"/>
    <property type="project" value="InterPro"/>
</dbReference>
<dbReference type="GO" id="GO:0003989">
    <property type="term" value="F:acetyl-CoA carboxylase activity"/>
    <property type="evidence" value="ECO:0007669"/>
    <property type="project" value="InterPro"/>
</dbReference>
<dbReference type="GO" id="GO:0005524">
    <property type="term" value="F:ATP binding"/>
    <property type="evidence" value="ECO:0007669"/>
    <property type="project" value="UniProtKB-KW"/>
</dbReference>
<dbReference type="GO" id="GO:0016743">
    <property type="term" value="F:carboxyl- or carbamoyltransferase activity"/>
    <property type="evidence" value="ECO:0007669"/>
    <property type="project" value="UniProtKB-UniRule"/>
</dbReference>
<dbReference type="GO" id="GO:0006633">
    <property type="term" value="P:fatty acid biosynthetic process"/>
    <property type="evidence" value="ECO:0007669"/>
    <property type="project" value="UniProtKB-KW"/>
</dbReference>
<dbReference type="GO" id="GO:2001295">
    <property type="term" value="P:malonyl-CoA biosynthetic process"/>
    <property type="evidence" value="ECO:0007669"/>
    <property type="project" value="UniProtKB-UniRule"/>
</dbReference>
<dbReference type="Gene3D" id="3.90.226.10">
    <property type="entry name" value="2-enoyl-CoA Hydratase, Chain A, domain 1"/>
    <property type="match status" value="1"/>
</dbReference>
<dbReference type="HAMAP" id="MF_00823">
    <property type="entry name" value="AcetylCoA_CT_alpha"/>
    <property type="match status" value="1"/>
</dbReference>
<dbReference type="InterPro" id="IPR001095">
    <property type="entry name" value="Acetyl_CoA_COase_a_su"/>
</dbReference>
<dbReference type="InterPro" id="IPR029045">
    <property type="entry name" value="ClpP/crotonase-like_dom_sf"/>
</dbReference>
<dbReference type="InterPro" id="IPR011763">
    <property type="entry name" value="COA_CT_C"/>
</dbReference>
<dbReference type="NCBIfam" id="TIGR00513">
    <property type="entry name" value="accA"/>
    <property type="match status" value="1"/>
</dbReference>
<dbReference type="NCBIfam" id="NF041504">
    <property type="entry name" value="AccA_sub"/>
    <property type="match status" value="1"/>
</dbReference>
<dbReference type="NCBIfam" id="NF004344">
    <property type="entry name" value="PRK05724.1"/>
    <property type="match status" value="1"/>
</dbReference>
<dbReference type="PANTHER" id="PTHR42853">
    <property type="entry name" value="ACETYL-COENZYME A CARBOXYLASE CARBOXYL TRANSFERASE SUBUNIT ALPHA"/>
    <property type="match status" value="1"/>
</dbReference>
<dbReference type="PANTHER" id="PTHR42853:SF3">
    <property type="entry name" value="ACETYL-COENZYME A CARBOXYLASE CARBOXYL TRANSFERASE SUBUNIT ALPHA, CHLOROPLASTIC"/>
    <property type="match status" value="1"/>
</dbReference>
<dbReference type="Pfam" id="PF03255">
    <property type="entry name" value="ACCA"/>
    <property type="match status" value="1"/>
</dbReference>
<dbReference type="PRINTS" id="PR01069">
    <property type="entry name" value="ACCCTRFRASEA"/>
</dbReference>
<dbReference type="SUPFAM" id="SSF52096">
    <property type="entry name" value="ClpP/crotonase"/>
    <property type="match status" value="1"/>
</dbReference>
<dbReference type="PROSITE" id="PS50989">
    <property type="entry name" value="COA_CT_CTER"/>
    <property type="match status" value="1"/>
</dbReference>
<gene>
    <name evidence="1" type="primary">accA</name>
    <name type="ordered locus">OB2173</name>
</gene>
<organism>
    <name type="scientific">Oceanobacillus iheyensis (strain DSM 14371 / CIP 107618 / JCM 11309 / KCTC 3954 / HTE831)</name>
    <dbReference type="NCBI Taxonomy" id="221109"/>
    <lineage>
        <taxon>Bacteria</taxon>
        <taxon>Bacillati</taxon>
        <taxon>Bacillota</taxon>
        <taxon>Bacilli</taxon>
        <taxon>Bacillales</taxon>
        <taxon>Bacillaceae</taxon>
        <taxon>Oceanobacillus</taxon>
    </lineage>
</organism>
<sequence length="317" mass="35751">MTPILDFEKPIVNLKEKIVELKSFTENSEIDLTKEIETLEERLARLEEDIYGNLKPWNRVQMARHPDRPTTMDYIERIFTDFIEFHGDRFYGEDEAIISGIGYYKDSPVTVIGHQRGKDTKENIRRNFGMPHPEGYRKALRHMQQAEKFNRPIITFIDTKGAYPGKAAEERGQSEAIAKNLMEMAGLQVPIICIVIGEGGSGGALGLGVGNHIHMLENSTYSVISPEGAAAILWKDSTQAKKAAETMKITAPDLKELGIIDQVISEPRGGAHRDVDSQAELIDNIIKQSLVELMLLSSEELVDKRWEKYKQMGTFMS</sequence>
<accession>Q8EPD5</accession>
<name>ACCA_OCEIH</name>
<evidence type="ECO:0000255" key="1">
    <source>
        <dbReference type="HAMAP-Rule" id="MF_00823"/>
    </source>
</evidence>
<evidence type="ECO:0000255" key="2">
    <source>
        <dbReference type="PROSITE-ProRule" id="PRU01137"/>
    </source>
</evidence>
<keyword id="KW-0067">ATP-binding</keyword>
<keyword id="KW-0963">Cytoplasm</keyword>
<keyword id="KW-0275">Fatty acid biosynthesis</keyword>
<keyword id="KW-0276">Fatty acid metabolism</keyword>
<keyword id="KW-0444">Lipid biosynthesis</keyword>
<keyword id="KW-0443">Lipid metabolism</keyword>
<keyword id="KW-0547">Nucleotide-binding</keyword>
<keyword id="KW-1185">Reference proteome</keyword>
<keyword id="KW-0808">Transferase</keyword>
<feature type="chain" id="PRO_0000223794" description="Acetyl-coenzyme A carboxylase carboxyl transferase subunit alpha">
    <location>
        <begin position="1"/>
        <end position="317"/>
    </location>
</feature>
<feature type="domain" description="CoA carboxyltransferase C-terminal" evidence="2">
    <location>
        <begin position="38"/>
        <end position="292"/>
    </location>
</feature>
<proteinExistence type="inferred from homology"/>
<protein>
    <recommendedName>
        <fullName evidence="1">Acetyl-coenzyme A carboxylase carboxyl transferase subunit alpha</fullName>
        <shortName evidence="1">ACCase subunit alpha</shortName>
        <shortName evidence="1">Acetyl-CoA carboxylase carboxyltransferase subunit alpha</shortName>
        <ecNumber evidence="1">2.1.3.15</ecNumber>
    </recommendedName>
</protein>